<comment type="function">
    <text evidence="3">2-oxoglutarate (OG)- and Fe(II)-dependent dioxygenase (2OGD) involved in scopoletin and umbelliferone biosynthesis (By similarity). Converts feruloyl CoA into 6'-hydroxyferuloyl CoA, and p-coumaroyl CoA into 2,4-dihydroxycinnamoyl-CoA (By similarity).</text>
</comment>
<comment type="catalytic activity">
    <reaction evidence="3">
        <text>(E)-4-coumaroyl-CoA + 2-oxoglutarate + O2 = (E)-2,4-dihydroxycinnamoyl-CoA + succinate + CO2</text>
        <dbReference type="Rhea" id="RHEA:57868"/>
        <dbReference type="ChEBI" id="CHEBI:15379"/>
        <dbReference type="ChEBI" id="CHEBI:16526"/>
        <dbReference type="ChEBI" id="CHEBI:16810"/>
        <dbReference type="ChEBI" id="CHEBI:30031"/>
        <dbReference type="ChEBI" id="CHEBI:85008"/>
        <dbReference type="ChEBI" id="CHEBI:142398"/>
        <dbReference type="EC" id="1.14.11.62"/>
    </reaction>
</comment>
<comment type="catalytic activity">
    <reaction evidence="3">
        <text>(E)-feruloyl-CoA + 2-oxoglutarate + O2 = (E)-6-hydroxyferuloyl-CoA + succinate + CO2</text>
        <dbReference type="Rhea" id="RHEA:57856"/>
        <dbReference type="ChEBI" id="CHEBI:15379"/>
        <dbReference type="ChEBI" id="CHEBI:16526"/>
        <dbReference type="ChEBI" id="CHEBI:16810"/>
        <dbReference type="ChEBI" id="CHEBI:30031"/>
        <dbReference type="ChEBI" id="CHEBI:87305"/>
        <dbReference type="ChEBI" id="CHEBI:142390"/>
        <dbReference type="EC" id="1.14.11.61"/>
    </reaction>
</comment>
<comment type="cofactor">
    <cofactor evidence="2">
        <name>L-ascorbate</name>
        <dbReference type="ChEBI" id="CHEBI:38290"/>
    </cofactor>
</comment>
<comment type="cofactor">
    <cofactor evidence="4">
        <name>Fe(2+)</name>
        <dbReference type="ChEBI" id="CHEBI:29033"/>
    </cofactor>
    <text evidence="4">Binds 1 Fe(2+) ion per subunit.</text>
</comment>
<comment type="pathway">
    <text evidence="3">Phenylpropanoid metabolism.</text>
</comment>
<comment type="similarity">
    <text evidence="6">Belongs to the iron/ascorbate-dependent oxidoreductase family.</text>
</comment>
<accession>A0A023GS28</accession>
<gene>
    <name evidence="5" type="primary">DIOX1</name>
</gene>
<keyword id="KW-0223">Dioxygenase</keyword>
<keyword id="KW-0408">Iron</keyword>
<keyword id="KW-0479">Metal-binding</keyword>
<keyword id="KW-0560">Oxidoreductase</keyword>
<protein>
    <recommendedName>
        <fullName evidence="5">Bi-functional coumaroyl CoA and feruloyl CoA ortho-hydroxylase Diox1</fullName>
        <ecNumber evidence="3 4">1.14.11.61</ecNumber>
        <ecNumber evidence="3 4">1.14.11.62</ecNumber>
    </recommendedName>
    <alternativeName>
        <fullName evidence="5">2-oxoglutarate-dependent dioxygenase 1</fullName>
    </alternativeName>
</protein>
<sequence length="369" mass="41879">MAPTKDFSTTTTNGAESWDDVADFVTKKGHGVKGLSERGIKTLPKPFHQPLEERFSEKKILERASIPLIDMSQWDSPEVVKSICDAAENWGFFQIVNHGVPLETLERVKEATHRFFGLPAEEKNNYSKENSPINNVRFGSSFVPHVEKALEWKDFLSMFYVSEEETNTYWPPICRDEMLEYMRSSEVLIQRLMEVLVVKGLKVKQIDEIREPMLVGSRRINLNYYPKCPNPELTLGVGRHSDISTFTILLQDQIGGLHVRKLDDTGNTWVHVTPIAGSLIINIGDALQIMSNGRYKSIEHMVVANGTQDRISVPLFVNPKPQAILCPFPEVLANGEKPVYKPVFCSDYSRHFYTKPHDGKKTVDVAMIN</sequence>
<evidence type="ECO:0000250" key="1">
    <source>
        <dbReference type="UniProtKB" id="D4N500"/>
    </source>
</evidence>
<evidence type="ECO:0000250" key="2">
    <source>
        <dbReference type="UniProtKB" id="Q9C899"/>
    </source>
</evidence>
<evidence type="ECO:0000250" key="3">
    <source>
        <dbReference type="UniProtKB" id="W5QJZ5"/>
    </source>
</evidence>
<evidence type="ECO:0000255" key="4">
    <source>
        <dbReference type="PROSITE-ProRule" id="PRU00805"/>
    </source>
</evidence>
<evidence type="ECO:0000303" key="5">
    <source>
    </source>
</evidence>
<evidence type="ECO:0000305" key="6"/>
<reference key="1">
    <citation type="journal article" date="2012" name="Plant J.">
        <title>A 2-oxoglutarate-dependent dioxygenase from Ruta graveolens L. exhibits p-coumaroyl CoA 2'-hydroxylase activity (C2'H): a missing step in the synthesis of umbelliferone in plants.</title>
        <authorList>
            <person name="Vialart G."/>
            <person name="Hehn A."/>
            <person name="Olry A."/>
            <person name="Ito K."/>
            <person name="Krieger C."/>
            <person name="Larbat R."/>
            <person name="Paris C."/>
            <person name="Shimizu B."/>
            <person name="Sugimoto Y."/>
            <person name="Mizutani M."/>
            <person name="Bourgaud F."/>
        </authorList>
    </citation>
    <scope>NUCLEOTIDE SEQUENCE [MRNA]</scope>
</reference>
<dbReference type="EC" id="1.14.11.61" evidence="3 4"/>
<dbReference type="EC" id="1.14.11.62" evidence="3 4"/>
<dbReference type="EMBL" id="GU460156">
    <property type="protein sequence ID" value="ADV77968.1"/>
    <property type="molecule type" value="mRNA"/>
</dbReference>
<dbReference type="SMR" id="A0A023GS28"/>
<dbReference type="GO" id="GO:0016706">
    <property type="term" value="F:2-oxoglutarate-dependent dioxygenase activity"/>
    <property type="evidence" value="ECO:0000250"/>
    <property type="project" value="UniProtKB"/>
</dbReference>
<dbReference type="GO" id="GO:0102312">
    <property type="term" value="F:4-coumaroyl 2'-hydroxylase activity"/>
    <property type="evidence" value="ECO:0007669"/>
    <property type="project" value="UniProtKB-EC"/>
</dbReference>
<dbReference type="GO" id="GO:0046872">
    <property type="term" value="F:metal ion binding"/>
    <property type="evidence" value="ECO:0007669"/>
    <property type="project" value="UniProtKB-KW"/>
</dbReference>
<dbReference type="GO" id="GO:0009805">
    <property type="term" value="P:coumarin biosynthetic process"/>
    <property type="evidence" value="ECO:0000250"/>
    <property type="project" value="UniProtKB"/>
</dbReference>
<dbReference type="GO" id="GO:0009699">
    <property type="term" value="P:phenylpropanoid biosynthetic process"/>
    <property type="evidence" value="ECO:0000250"/>
    <property type="project" value="UniProtKB"/>
</dbReference>
<dbReference type="GO" id="GO:0010224">
    <property type="term" value="P:response to UV-B"/>
    <property type="evidence" value="ECO:0000250"/>
    <property type="project" value="UniProtKB"/>
</dbReference>
<dbReference type="FunFam" id="2.60.120.330:FF:000023">
    <property type="entry name" value="Feruloyl CoA ortho-hydroxylase 1"/>
    <property type="match status" value="1"/>
</dbReference>
<dbReference type="Gene3D" id="2.60.120.330">
    <property type="entry name" value="B-lactam Antibiotic, Isopenicillin N Synthase, Chain"/>
    <property type="match status" value="1"/>
</dbReference>
<dbReference type="InterPro" id="IPR026992">
    <property type="entry name" value="DIOX_N"/>
</dbReference>
<dbReference type="InterPro" id="IPR044861">
    <property type="entry name" value="IPNS-like_FE2OG_OXY"/>
</dbReference>
<dbReference type="InterPro" id="IPR027443">
    <property type="entry name" value="IPNS-like_sf"/>
</dbReference>
<dbReference type="InterPro" id="IPR005123">
    <property type="entry name" value="Oxoglu/Fe-dep_dioxygenase_dom"/>
</dbReference>
<dbReference type="PANTHER" id="PTHR10209:SF243">
    <property type="entry name" value="FERULOYL COA ORTHO-HYDROXYLASE 1-RELATED"/>
    <property type="match status" value="1"/>
</dbReference>
<dbReference type="PANTHER" id="PTHR10209">
    <property type="entry name" value="OXIDOREDUCTASE, 2OG-FE II OXYGENASE FAMILY PROTEIN"/>
    <property type="match status" value="1"/>
</dbReference>
<dbReference type="Pfam" id="PF03171">
    <property type="entry name" value="2OG-FeII_Oxy"/>
    <property type="match status" value="1"/>
</dbReference>
<dbReference type="Pfam" id="PF14226">
    <property type="entry name" value="DIOX_N"/>
    <property type="match status" value="1"/>
</dbReference>
<dbReference type="SUPFAM" id="SSF51197">
    <property type="entry name" value="Clavaminate synthase-like"/>
    <property type="match status" value="1"/>
</dbReference>
<dbReference type="PROSITE" id="PS51471">
    <property type="entry name" value="FE2OG_OXY"/>
    <property type="match status" value="1"/>
</dbReference>
<proteinExistence type="evidence at transcript level"/>
<feature type="chain" id="PRO_0000447359" description="Bi-functional coumaroyl CoA and feruloyl CoA ortho-hydroxylase Diox1">
    <location>
        <begin position="1"/>
        <end position="369"/>
    </location>
</feature>
<feature type="domain" description="Fe2OG dioxygenase" evidence="4">
    <location>
        <begin position="209"/>
        <end position="319"/>
    </location>
</feature>
<feature type="binding site" evidence="1">
    <location>
        <position position="225"/>
    </location>
    <ligand>
        <name>2-oxoglutarate</name>
        <dbReference type="ChEBI" id="CHEBI:16810"/>
    </ligand>
</feature>
<feature type="binding site" evidence="4">
    <location>
        <position position="240"/>
    </location>
    <ligand>
        <name>Fe cation</name>
        <dbReference type="ChEBI" id="CHEBI:24875"/>
    </ligand>
</feature>
<feature type="binding site" evidence="4">
    <location>
        <position position="242"/>
    </location>
    <ligand>
        <name>Fe cation</name>
        <dbReference type="ChEBI" id="CHEBI:24875"/>
    </ligand>
</feature>
<feature type="binding site" evidence="4">
    <location>
        <position position="300"/>
    </location>
    <ligand>
        <name>Fe cation</name>
        <dbReference type="ChEBI" id="CHEBI:24875"/>
    </ligand>
</feature>
<feature type="binding site" evidence="4">
    <location>
        <position position="310"/>
    </location>
    <ligand>
        <name>2-oxoglutarate</name>
        <dbReference type="ChEBI" id="CHEBI:16810"/>
    </ligand>
</feature>
<feature type="binding site" evidence="1">
    <location>
        <position position="312"/>
    </location>
    <ligand>
        <name>2-oxoglutarate</name>
        <dbReference type="ChEBI" id="CHEBI:16810"/>
    </ligand>
</feature>
<organism>
    <name type="scientific">Ruta graveolens</name>
    <name type="common">Common rue</name>
    <dbReference type="NCBI Taxonomy" id="37565"/>
    <lineage>
        <taxon>Eukaryota</taxon>
        <taxon>Viridiplantae</taxon>
        <taxon>Streptophyta</taxon>
        <taxon>Embryophyta</taxon>
        <taxon>Tracheophyta</taxon>
        <taxon>Spermatophyta</taxon>
        <taxon>Magnoliopsida</taxon>
        <taxon>eudicotyledons</taxon>
        <taxon>Gunneridae</taxon>
        <taxon>Pentapetalae</taxon>
        <taxon>rosids</taxon>
        <taxon>malvids</taxon>
        <taxon>Sapindales</taxon>
        <taxon>Rutaceae</taxon>
        <taxon>Rutoideae</taxon>
        <taxon>Ruta</taxon>
    </lineage>
</organism>
<name>DIOX1_RUTGR</name>